<name>FHUG_BACSU</name>
<keyword id="KW-1003">Cell membrane</keyword>
<keyword id="KW-0406">Ion transport</keyword>
<keyword id="KW-0408">Iron</keyword>
<keyword id="KW-0410">Iron transport</keyword>
<keyword id="KW-0472">Membrane</keyword>
<keyword id="KW-1185">Reference proteome</keyword>
<keyword id="KW-0812">Transmembrane</keyword>
<keyword id="KW-1133">Transmembrane helix</keyword>
<keyword id="KW-0813">Transport</keyword>
<feature type="chain" id="PRO_0000060027" description="Iron(3+)-hydroxamate import system permease protein FhuG">
    <location>
        <begin position="1"/>
        <end position="336"/>
    </location>
</feature>
<feature type="transmembrane region" description="Helical" evidence="2">
    <location>
        <begin position="9"/>
        <end position="29"/>
    </location>
</feature>
<feature type="transmembrane region" description="Helical" evidence="2">
    <location>
        <begin position="63"/>
        <end position="83"/>
    </location>
</feature>
<feature type="transmembrane region" description="Helical" evidence="2">
    <location>
        <begin position="91"/>
        <end position="111"/>
    </location>
</feature>
<feature type="transmembrane region" description="Helical" evidence="2">
    <location>
        <begin position="124"/>
        <end position="144"/>
    </location>
</feature>
<feature type="transmembrane region" description="Helical" evidence="2">
    <location>
        <begin position="155"/>
        <end position="175"/>
    </location>
</feature>
<feature type="transmembrane region" description="Helical" evidence="2">
    <location>
        <begin position="193"/>
        <end position="213"/>
    </location>
</feature>
<feature type="transmembrane region" description="Helical" evidence="2">
    <location>
        <begin position="245"/>
        <end position="265"/>
    </location>
</feature>
<feature type="transmembrane region" description="Helical" evidence="2">
    <location>
        <begin position="285"/>
        <end position="305"/>
    </location>
</feature>
<feature type="transmembrane region" description="Helical" evidence="2">
    <location>
        <begin position="313"/>
        <end position="333"/>
    </location>
</feature>
<sequence length="336" mass="36155">MKTKTNKPLIVMAVTFLLIVVVFFISLNLGVIKIAPLKTLQVFFGQGTARDELVLFEFRLPRIILSLLVGAGISVAGAILQSVSQNELAEPGILGINAGGSLAVVLFIYFFQGSASDLSFFGTFMLPFSALAGAILAAFLIYILAWKKGVTPIRLILVGIGVNAGFNALLLIFQLKMDPHDFMQAAVWISGSIWGANWNMIWAILPWIVILLLFTLYKARYLNIMQLGDQLATGLGTAVEKERRILLLAAVTLAASCVAAAGGIAFLGLIAPHVARRLTGPRHQTLIPVSAFIGSFLFLLADTLARNVLAPSEIPVGLVISVLGAPYFIYLLMKAN</sequence>
<protein>
    <recommendedName>
        <fullName>Iron(3+)-hydroxamate import system permease protein FhuG</fullName>
    </recommendedName>
    <alternativeName>
        <fullName>Ferric hydroxamate uptake protein G</fullName>
    </alternativeName>
    <alternativeName>
        <fullName>Ferrichrome transport system permease protein FhuG</fullName>
    </alternativeName>
    <alternativeName>
        <fullName>Iron(III)-hydroxamate import system permease protein FhuG</fullName>
    </alternativeName>
</protein>
<evidence type="ECO:0000250" key="1"/>
<evidence type="ECO:0000255" key="2"/>
<evidence type="ECO:0000305" key="3"/>
<accession>P49937</accession>
<organism>
    <name type="scientific">Bacillus subtilis (strain 168)</name>
    <dbReference type="NCBI Taxonomy" id="224308"/>
    <lineage>
        <taxon>Bacteria</taxon>
        <taxon>Bacillati</taxon>
        <taxon>Bacillota</taxon>
        <taxon>Bacilli</taxon>
        <taxon>Bacillales</taxon>
        <taxon>Bacillaceae</taxon>
        <taxon>Bacillus</taxon>
    </lineage>
</organism>
<reference key="1">
    <citation type="submission" date="1995-11" db="EMBL/GenBank/DDBJ databases">
        <authorList>
            <person name="Schneider R."/>
            <person name="Hantke K."/>
        </authorList>
    </citation>
    <scope>NUCLEOTIDE SEQUENCE [GENOMIC DNA]</scope>
    <source>
        <strain>168</strain>
    </source>
</reference>
<reference key="2">
    <citation type="journal article" date="1998" name="Microbiology">
        <title>The yvsA-yvqA (293 degrees - 289 degrees) region of the Bacillus subtilis chromosome containing genes involved in metal ion uptake and a putative sigma factor.</title>
        <authorList>
            <person name="Wipat A."/>
            <person name="Brignell C.S."/>
            <person name="Guy J.B."/>
            <person name="Rose M."/>
            <person name="Emmerson P.T."/>
            <person name="Harwood C.R."/>
        </authorList>
    </citation>
    <scope>NUCLEOTIDE SEQUENCE [GENOMIC DNA]</scope>
    <source>
        <strain>168</strain>
    </source>
</reference>
<reference key="3">
    <citation type="journal article" date="1997" name="Nature">
        <title>The complete genome sequence of the Gram-positive bacterium Bacillus subtilis.</title>
        <authorList>
            <person name="Kunst F."/>
            <person name="Ogasawara N."/>
            <person name="Moszer I."/>
            <person name="Albertini A.M."/>
            <person name="Alloni G."/>
            <person name="Azevedo V."/>
            <person name="Bertero M.G."/>
            <person name="Bessieres P."/>
            <person name="Bolotin A."/>
            <person name="Borchert S."/>
            <person name="Borriss R."/>
            <person name="Boursier L."/>
            <person name="Brans A."/>
            <person name="Braun M."/>
            <person name="Brignell S.C."/>
            <person name="Bron S."/>
            <person name="Brouillet S."/>
            <person name="Bruschi C.V."/>
            <person name="Caldwell B."/>
            <person name="Capuano V."/>
            <person name="Carter N.M."/>
            <person name="Choi S.-K."/>
            <person name="Codani J.-J."/>
            <person name="Connerton I.F."/>
            <person name="Cummings N.J."/>
            <person name="Daniel R.A."/>
            <person name="Denizot F."/>
            <person name="Devine K.M."/>
            <person name="Duesterhoeft A."/>
            <person name="Ehrlich S.D."/>
            <person name="Emmerson P.T."/>
            <person name="Entian K.-D."/>
            <person name="Errington J."/>
            <person name="Fabret C."/>
            <person name="Ferrari E."/>
            <person name="Foulger D."/>
            <person name="Fritz C."/>
            <person name="Fujita M."/>
            <person name="Fujita Y."/>
            <person name="Fuma S."/>
            <person name="Galizzi A."/>
            <person name="Galleron N."/>
            <person name="Ghim S.-Y."/>
            <person name="Glaser P."/>
            <person name="Goffeau A."/>
            <person name="Golightly E.J."/>
            <person name="Grandi G."/>
            <person name="Guiseppi G."/>
            <person name="Guy B.J."/>
            <person name="Haga K."/>
            <person name="Haiech J."/>
            <person name="Harwood C.R."/>
            <person name="Henaut A."/>
            <person name="Hilbert H."/>
            <person name="Holsappel S."/>
            <person name="Hosono S."/>
            <person name="Hullo M.-F."/>
            <person name="Itaya M."/>
            <person name="Jones L.-M."/>
            <person name="Joris B."/>
            <person name="Karamata D."/>
            <person name="Kasahara Y."/>
            <person name="Klaerr-Blanchard M."/>
            <person name="Klein C."/>
            <person name="Kobayashi Y."/>
            <person name="Koetter P."/>
            <person name="Koningstein G."/>
            <person name="Krogh S."/>
            <person name="Kumano M."/>
            <person name="Kurita K."/>
            <person name="Lapidus A."/>
            <person name="Lardinois S."/>
            <person name="Lauber J."/>
            <person name="Lazarevic V."/>
            <person name="Lee S.-M."/>
            <person name="Levine A."/>
            <person name="Liu H."/>
            <person name="Masuda S."/>
            <person name="Mauel C."/>
            <person name="Medigue C."/>
            <person name="Medina N."/>
            <person name="Mellado R.P."/>
            <person name="Mizuno M."/>
            <person name="Moestl D."/>
            <person name="Nakai S."/>
            <person name="Noback M."/>
            <person name="Noone D."/>
            <person name="O'Reilly M."/>
            <person name="Ogawa K."/>
            <person name="Ogiwara A."/>
            <person name="Oudega B."/>
            <person name="Park S.-H."/>
            <person name="Parro V."/>
            <person name="Pohl T.M."/>
            <person name="Portetelle D."/>
            <person name="Porwollik S."/>
            <person name="Prescott A.M."/>
            <person name="Presecan E."/>
            <person name="Pujic P."/>
            <person name="Purnelle B."/>
            <person name="Rapoport G."/>
            <person name="Rey M."/>
            <person name="Reynolds S."/>
            <person name="Rieger M."/>
            <person name="Rivolta C."/>
            <person name="Rocha E."/>
            <person name="Roche B."/>
            <person name="Rose M."/>
            <person name="Sadaie Y."/>
            <person name="Sato T."/>
            <person name="Scanlan E."/>
            <person name="Schleich S."/>
            <person name="Schroeter R."/>
            <person name="Scoffone F."/>
            <person name="Sekiguchi J."/>
            <person name="Sekowska A."/>
            <person name="Seror S.J."/>
            <person name="Serror P."/>
            <person name="Shin B.-S."/>
            <person name="Soldo B."/>
            <person name="Sorokin A."/>
            <person name="Tacconi E."/>
            <person name="Takagi T."/>
            <person name="Takahashi H."/>
            <person name="Takemaru K."/>
            <person name="Takeuchi M."/>
            <person name="Tamakoshi A."/>
            <person name="Tanaka T."/>
            <person name="Terpstra P."/>
            <person name="Tognoni A."/>
            <person name="Tosato V."/>
            <person name="Uchiyama S."/>
            <person name="Vandenbol M."/>
            <person name="Vannier F."/>
            <person name="Vassarotti A."/>
            <person name="Viari A."/>
            <person name="Wambutt R."/>
            <person name="Wedler E."/>
            <person name="Wedler H."/>
            <person name="Weitzenegger T."/>
            <person name="Winters P."/>
            <person name="Wipat A."/>
            <person name="Yamamoto H."/>
            <person name="Yamane K."/>
            <person name="Yasumoto K."/>
            <person name="Yata K."/>
            <person name="Yoshida K."/>
            <person name="Yoshikawa H.-F."/>
            <person name="Zumstein E."/>
            <person name="Yoshikawa H."/>
            <person name="Danchin A."/>
        </authorList>
    </citation>
    <scope>NUCLEOTIDE SEQUENCE [LARGE SCALE GENOMIC DNA]</scope>
    <source>
        <strain>168</strain>
    </source>
</reference>
<comment type="function">
    <text evidence="1">Part of the ABC transporter complex FhuBGCD involved in iron(3+)-hydroxamate import. Responsible for the translocation of the substrate across the membrane (By similarity).</text>
</comment>
<comment type="subunit">
    <text evidence="1">The complex is composed of an ATP-binding protein (FhuC), two transmembrane proteins (FhuB and FhuG) and a solute-binding protein (FhuD or YxeB).</text>
</comment>
<comment type="subcellular location">
    <subcellularLocation>
        <location evidence="3">Cell membrane</location>
        <topology evidence="3">Multi-pass membrane protein</topology>
    </subcellularLocation>
</comment>
<comment type="similarity">
    <text evidence="3">Belongs to the binding-protein-dependent transport system permease family. FecCD subfamily.</text>
</comment>
<dbReference type="EMBL" id="X93092">
    <property type="protein sequence ID" value="CAA63644.1"/>
    <property type="molecule type" value="Genomic_DNA"/>
</dbReference>
<dbReference type="EMBL" id="AJ223978">
    <property type="protein sequence ID" value="CAA11721.1"/>
    <property type="molecule type" value="Genomic_DNA"/>
</dbReference>
<dbReference type="EMBL" id="AL009126">
    <property type="protein sequence ID" value="CAB15336.1"/>
    <property type="molecule type" value="Genomic_DNA"/>
</dbReference>
<dbReference type="PIR" id="D69622">
    <property type="entry name" value="D69622"/>
</dbReference>
<dbReference type="RefSeq" id="NP_391211.1">
    <property type="nucleotide sequence ID" value="NC_000964.3"/>
</dbReference>
<dbReference type="RefSeq" id="WP_003244298.1">
    <property type="nucleotide sequence ID" value="NZ_OZ025638.1"/>
</dbReference>
<dbReference type="SMR" id="P49937"/>
<dbReference type="FunCoup" id="P49937">
    <property type="interactions" value="38"/>
</dbReference>
<dbReference type="STRING" id="224308.BSU33300"/>
<dbReference type="PaxDb" id="224308-BSU33300"/>
<dbReference type="EnsemblBacteria" id="CAB15336">
    <property type="protein sequence ID" value="CAB15336"/>
    <property type="gene ID" value="BSU_33300"/>
</dbReference>
<dbReference type="GeneID" id="938619"/>
<dbReference type="KEGG" id="bsu:BSU33300"/>
<dbReference type="PATRIC" id="fig|224308.179.peg.3614"/>
<dbReference type="eggNOG" id="COG0609">
    <property type="taxonomic scope" value="Bacteria"/>
</dbReference>
<dbReference type="InParanoid" id="P49937"/>
<dbReference type="OrthoDB" id="9811721at2"/>
<dbReference type="PhylomeDB" id="P49937"/>
<dbReference type="BioCyc" id="BSUB:BSU33300-MONOMER"/>
<dbReference type="Proteomes" id="UP000001570">
    <property type="component" value="Chromosome"/>
</dbReference>
<dbReference type="GO" id="GO:0005886">
    <property type="term" value="C:plasma membrane"/>
    <property type="evidence" value="ECO:0000318"/>
    <property type="project" value="GO_Central"/>
</dbReference>
<dbReference type="GO" id="GO:0022857">
    <property type="term" value="F:transmembrane transporter activity"/>
    <property type="evidence" value="ECO:0000318"/>
    <property type="project" value="GO_Central"/>
</dbReference>
<dbReference type="GO" id="GO:0033214">
    <property type="term" value="P:siderophore-dependent iron import into cell"/>
    <property type="evidence" value="ECO:0000318"/>
    <property type="project" value="GO_Central"/>
</dbReference>
<dbReference type="CDD" id="cd06550">
    <property type="entry name" value="TM_ABC_iron-siderophores_like"/>
    <property type="match status" value="1"/>
</dbReference>
<dbReference type="FunFam" id="1.10.3470.10:FF:000001">
    <property type="entry name" value="Vitamin B12 ABC transporter permease BtuC"/>
    <property type="match status" value="1"/>
</dbReference>
<dbReference type="Gene3D" id="1.10.3470.10">
    <property type="entry name" value="ABC transporter involved in vitamin B12 uptake, BtuC"/>
    <property type="match status" value="1"/>
</dbReference>
<dbReference type="InterPro" id="IPR037294">
    <property type="entry name" value="ABC_BtuC-like"/>
</dbReference>
<dbReference type="InterPro" id="IPR000522">
    <property type="entry name" value="ABC_transptr_permease_BtuC"/>
</dbReference>
<dbReference type="PANTHER" id="PTHR30472">
    <property type="entry name" value="FERRIC ENTEROBACTIN TRANSPORT SYSTEM PERMEASE PROTEIN"/>
    <property type="match status" value="1"/>
</dbReference>
<dbReference type="PANTHER" id="PTHR30472:SF64">
    <property type="entry name" value="IRON(3+)-HYDROXAMATE IMPORT SYSTEM PERMEASE PROTEIN FHUG"/>
    <property type="match status" value="1"/>
</dbReference>
<dbReference type="Pfam" id="PF01032">
    <property type="entry name" value="FecCD"/>
    <property type="match status" value="1"/>
</dbReference>
<dbReference type="SUPFAM" id="SSF81345">
    <property type="entry name" value="ABC transporter involved in vitamin B12 uptake, BtuC"/>
    <property type="match status" value="1"/>
</dbReference>
<proteinExistence type="inferred from homology"/>
<gene>
    <name type="primary">fhuG</name>
    <name type="ordered locus">BSU33300</name>
</gene>